<sequence>MDRVVLMLSVLSLGVSSQPITDGQRLFSIAVSRVQHLHLLAQRLFSDFESSLQTEEQRQLNKIFLQDFCNSDYIISPIDKHETQRSSVLKLLSISYRLVESWEFPSRSLAGGSAPRNQISPKLSELKTGIHLLIRANEDGAELFPDSSALQLAPYGDYYHSPGTDESLRRTYELLACFKKDMHKVETYLTVAKCRLSPEANCTL</sequence>
<gene>
    <name type="primary">gh</name>
</gene>
<reference key="1">
    <citation type="journal article" date="1991" name="DNA Seq.">
        <title>Molecular cloning and sequencing of Australian black bream Acanthopagrus butcheri and barramundi Lates calcarifer fish growth hormone cDNA using polymerase chain reaction.</title>
        <authorList>
            <person name="Knibb W."/>
            <person name="Robins A."/>
            <person name="Crocker L."/>
            <person name="Rizzon J."/>
            <person name="Heyward A."/>
            <person name="Wells J."/>
        </authorList>
    </citation>
    <scope>NUCLEOTIDE SEQUENCE [MRNA]</scope>
    <source>
        <tissue>Brain</tissue>
    </source>
</reference>
<dbReference type="EMBL" id="X59377">
    <property type="protein sequence ID" value="CAA42021.1"/>
    <property type="molecule type" value="mRNA"/>
</dbReference>
<dbReference type="PIR" id="S30491">
    <property type="entry name" value="S30491"/>
</dbReference>
<dbReference type="SMR" id="Q01282"/>
<dbReference type="GO" id="GO:0005615">
    <property type="term" value="C:extracellular space"/>
    <property type="evidence" value="ECO:0007669"/>
    <property type="project" value="InterPro"/>
</dbReference>
<dbReference type="GO" id="GO:0070186">
    <property type="term" value="F:growth hormone activity"/>
    <property type="evidence" value="ECO:0007669"/>
    <property type="project" value="TreeGrafter"/>
</dbReference>
<dbReference type="GO" id="GO:0005131">
    <property type="term" value="F:growth hormone receptor binding"/>
    <property type="evidence" value="ECO:0007669"/>
    <property type="project" value="InterPro"/>
</dbReference>
<dbReference type="GO" id="GO:0046872">
    <property type="term" value="F:metal ion binding"/>
    <property type="evidence" value="ECO:0007669"/>
    <property type="project" value="UniProtKB-KW"/>
</dbReference>
<dbReference type="GO" id="GO:0048513">
    <property type="term" value="P:animal organ development"/>
    <property type="evidence" value="ECO:0007669"/>
    <property type="project" value="TreeGrafter"/>
</dbReference>
<dbReference type="GO" id="GO:0060396">
    <property type="term" value="P:growth hormone receptor signaling pathway"/>
    <property type="evidence" value="ECO:0007669"/>
    <property type="project" value="TreeGrafter"/>
</dbReference>
<dbReference type="GO" id="GO:0045927">
    <property type="term" value="P:positive regulation of growth"/>
    <property type="evidence" value="ECO:0007669"/>
    <property type="project" value="TreeGrafter"/>
</dbReference>
<dbReference type="GO" id="GO:0046427">
    <property type="term" value="P:positive regulation of receptor signaling pathway via JAK-STAT"/>
    <property type="evidence" value="ECO:0007669"/>
    <property type="project" value="TreeGrafter"/>
</dbReference>
<dbReference type="GO" id="GO:0031667">
    <property type="term" value="P:response to nutrient levels"/>
    <property type="evidence" value="ECO:0007669"/>
    <property type="project" value="TreeGrafter"/>
</dbReference>
<dbReference type="CDD" id="cd10285">
    <property type="entry name" value="somatotropin_like"/>
    <property type="match status" value="1"/>
</dbReference>
<dbReference type="FunFam" id="1.20.1250.10:FF:000009">
    <property type="entry name" value="Growth hormone"/>
    <property type="match status" value="1"/>
</dbReference>
<dbReference type="Gene3D" id="1.20.1250.10">
    <property type="match status" value="1"/>
</dbReference>
<dbReference type="InterPro" id="IPR009079">
    <property type="entry name" value="4_helix_cytokine-like_core"/>
</dbReference>
<dbReference type="InterPro" id="IPR034975">
    <property type="entry name" value="Somatotropin"/>
</dbReference>
<dbReference type="InterPro" id="IPR001400">
    <property type="entry name" value="Somatotropin/Prolactin"/>
</dbReference>
<dbReference type="InterPro" id="IPR018116">
    <property type="entry name" value="Somatotropin_CS"/>
</dbReference>
<dbReference type="PANTHER" id="PTHR11417:SF2">
    <property type="entry name" value="SOMATOTROPIN"/>
    <property type="match status" value="1"/>
</dbReference>
<dbReference type="PANTHER" id="PTHR11417">
    <property type="entry name" value="SOMATOTROPIN,PROLACTIN"/>
    <property type="match status" value="1"/>
</dbReference>
<dbReference type="Pfam" id="PF00103">
    <property type="entry name" value="Hormone_1"/>
    <property type="match status" value="1"/>
</dbReference>
<dbReference type="PRINTS" id="PR00836">
    <property type="entry name" value="SOMATOTROPIN"/>
</dbReference>
<dbReference type="SUPFAM" id="SSF47266">
    <property type="entry name" value="4-helical cytokines"/>
    <property type="match status" value="1"/>
</dbReference>
<dbReference type="PROSITE" id="PS00266">
    <property type="entry name" value="SOMATOTROPIN_1"/>
    <property type="match status" value="1"/>
</dbReference>
<dbReference type="PROSITE" id="PS00338">
    <property type="entry name" value="SOMATOTROPIN_2"/>
    <property type="match status" value="1"/>
</dbReference>
<comment type="function">
    <text>Growth hormone plays an important role in growth control and is involved in the regulation of several anabolic processes. Implicated as an osmoregulatory substance important for seawater adaptation.</text>
</comment>
<comment type="subcellular location">
    <subcellularLocation>
        <location>Secreted</location>
    </subcellularLocation>
</comment>
<comment type="similarity">
    <text evidence="2">Belongs to the somatotropin/prolactin family.</text>
</comment>
<protein>
    <recommendedName>
        <fullName>Somatotropin</fullName>
    </recommendedName>
    <alternativeName>
        <fullName>Growth hormone</fullName>
    </alternativeName>
</protein>
<name>SOMA_ACABU</name>
<feature type="signal peptide" evidence="1">
    <location>
        <begin position="1"/>
        <end position="17"/>
    </location>
</feature>
<feature type="chain" id="PRO_0000033011" description="Somatotropin">
    <location>
        <begin position="18"/>
        <end position="204"/>
    </location>
</feature>
<feature type="binding site" evidence="1">
    <location>
        <position position="36"/>
    </location>
    <ligand>
        <name>Zn(2+)</name>
        <dbReference type="ChEBI" id="CHEBI:29105"/>
    </ligand>
</feature>
<feature type="binding site" evidence="1">
    <location>
        <position position="186"/>
    </location>
    <ligand>
        <name>Zn(2+)</name>
        <dbReference type="ChEBI" id="CHEBI:29105"/>
    </ligand>
</feature>
<feature type="modified residue" description="Pyrrolidone carboxylic acid" evidence="1">
    <location>
        <position position="18"/>
    </location>
</feature>
<feature type="disulfide bond" evidence="1">
    <location>
        <begin position="69"/>
        <end position="177"/>
    </location>
</feature>
<feature type="disulfide bond" evidence="1">
    <location>
        <begin position="194"/>
        <end position="202"/>
    </location>
</feature>
<proteinExistence type="evidence at transcript level"/>
<organism>
    <name type="scientific">Acanthopagrus butcheri</name>
    <name type="common">Australian black bream</name>
    <name type="synonym">Mylio butcheri</name>
    <dbReference type="NCBI Taxonomy" id="8179"/>
    <lineage>
        <taxon>Eukaryota</taxon>
        <taxon>Metazoa</taxon>
        <taxon>Chordata</taxon>
        <taxon>Craniata</taxon>
        <taxon>Vertebrata</taxon>
        <taxon>Euteleostomi</taxon>
        <taxon>Actinopterygii</taxon>
        <taxon>Neopterygii</taxon>
        <taxon>Teleostei</taxon>
        <taxon>Neoteleostei</taxon>
        <taxon>Acanthomorphata</taxon>
        <taxon>Eupercaria</taxon>
        <taxon>Spariformes</taxon>
        <taxon>Sparidae</taxon>
        <taxon>Acanthopagrus</taxon>
    </lineage>
</organism>
<accession>Q01282</accession>
<evidence type="ECO:0000250" key="1"/>
<evidence type="ECO:0000305" key="2"/>
<keyword id="KW-1015">Disulfide bond</keyword>
<keyword id="KW-0372">Hormone</keyword>
<keyword id="KW-0479">Metal-binding</keyword>
<keyword id="KW-0873">Pyrrolidone carboxylic acid</keyword>
<keyword id="KW-0964">Secreted</keyword>
<keyword id="KW-0732">Signal</keyword>
<keyword id="KW-0862">Zinc</keyword>